<comment type="similarity">
    <text evidence="1">Belongs to the UPF0173 family.</text>
</comment>
<proteinExistence type="evidence at protein level"/>
<accession>P99149</accession>
<accession>Q99TF6</accession>
<keyword id="KW-0378">Hydrolase</keyword>
<gene>
    <name type="ordered locus">SA1529</name>
</gene>
<protein>
    <recommendedName>
        <fullName evidence="1">UPF0173 metal-dependent hydrolase SA1529</fullName>
    </recommendedName>
</protein>
<evidence type="ECO:0000255" key="1">
    <source>
        <dbReference type="HAMAP-Rule" id="MF_00457"/>
    </source>
</evidence>
<sequence length="229" mass="25251">MKLSFHGQSTIYLEGNNKKVIVDPFISNNPKCDLNIETVQVDYIVLTHGHFDHFGDVVELAKKTGATVIGSAEMADYLSSYHGVENVHGMNIGGKANFDFGSVKFVQAFHSSSFTHENGIPVYLGMPMGIVFEVEGKTIYHTGDTGLFSDMSLIAKRHPVDVCFVPIGDNFTMGIDDASYAINEFIKPKISVPIHYDTFPLIEQDPQQFKDAVNVGDVQILKPGESVQF</sequence>
<reference key="1">
    <citation type="journal article" date="2001" name="Lancet">
        <title>Whole genome sequencing of meticillin-resistant Staphylococcus aureus.</title>
        <authorList>
            <person name="Kuroda M."/>
            <person name="Ohta T."/>
            <person name="Uchiyama I."/>
            <person name="Baba T."/>
            <person name="Yuzawa H."/>
            <person name="Kobayashi I."/>
            <person name="Cui L."/>
            <person name="Oguchi A."/>
            <person name="Aoki K."/>
            <person name="Nagai Y."/>
            <person name="Lian J.-Q."/>
            <person name="Ito T."/>
            <person name="Kanamori M."/>
            <person name="Matsumaru H."/>
            <person name="Maruyama A."/>
            <person name="Murakami H."/>
            <person name="Hosoyama A."/>
            <person name="Mizutani-Ui Y."/>
            <person name="Takahashi N.K."/>
            <person name="Sawano T."/>
            <person name="Inoue R."/>
            <person name="Kaito C."/>
            <person name="Sekimizu K."/>
            <person name="Hirakawa H."/>
            <person name="Kuhara S."/>
            <person name="Goto S."/>
            <person name="Yabuzaki J."/>
            <person name="Kanehisa M."/>
            <person name="Yamashita A."/>
            <person name="Oshima K."/>
            <person name="Furuya K."/>
            <person name="Yoshino C."/>
            <person name="Shiba T."/>
            <person name="Hattori M."/>
            <person name="Ogasawara N."/>
            <person name="Hayashi H."/>
            <person name="Hiramatsu K."/>
        </authorList>
    </citation>
    <scope>NUCLEOTIDE SEQUENCE [LARGE SCALE GENOMIC DNA]</scope>
    <source>
        <strain>N315</strain>
    </source>
</reference>
<reference key="2">
    <citation type="journal article" date="2005" name="J. Microbiol. Methods">
        <title>Correlation of proteomic and transcriptomic profiles of Staphylococcus aureus during the post-exponential phase of growth.</title>
        <authorList>
            <person name="Scherl A."/>
            <person name="Francois P."/>
            <person name="Bento M."/>
            <person name="Deshusses J.M."/>
            <person name="Charbonnier Y."/>
            <person name="Converset V."/>
            <person name="Huyghe A."/>
            <person name="Walter N."/>
            <person name="Hoogland C."/>
            <person name="Appel R.D."/>
            <person name="Sanchez J.-C."/>
            <person name="Zimmermann-Ivol C.G."/>
            <person name="Corthals G.L."/>
            <person name="Hochstrasser D.F."/>
            <person name="Schrenzel J."/>
        </authorList>
    </citation>
    <scope>IDENTIFICATION BY MASS SPECTROMETRY</scope>
    <source>
        <strain>N315</strain>
    </source>
</reference>
<reference key="3">
    <citation type="submission" date="2007-10" db="UniProtKB">
        <title>Shotgun proteomic analysis of total and membrane protein extracts of S. aureus strain N315.</title>
        <authorList>
            <person name="Vaezzadeh A.R."/>
            <person name="Deshusses J."/>
            <person name="Lescuyer P."/>
            <person name="Hochstrasser D.F."/>
        </authorList>
    </citation>
    <scope>IDENTIFICATION BY MASS SPECTROMETRY [LARGE SCALE ANALYSIS]</scope>
    <source>
        <strain>N315</strain>
    </source>
</reference>
<name>Y1529_STAAN</name>
<feature type="chain" id="PRO_0000156383" description="UPF0173 metal-dependent hydrolase SA1529">
    <location>
        <begin position="1"/>
        <end position="229"/>
    </location>
</feature>
<dbReference type="EMBL" id="BA000018">
    <property type="protein sequence ID" value="BAB42796.1"/>
    <property type="molecule type" value="Genomic_DNA"/>
</dbReference>
<dbReference type="PIR" id="G89954">
    <property type="entry name" value="G89954"/>
</dbReference>
<dbReference type="RefSeq" id="WP_000777188.1">
    <property type="nucleotide sequence ID" value="NC_002745.2"/>
</dbReference>
<dbReference type="SMR" id="P99149"/>
<dbReference type="EnsemblBacteria" id="BAB42796">
    <property type="protein sequence ID" value="BAB42796"/>
    <property type="gene ID" value="BAB42796"/>
</dbReference>
<dbReference type="KEGG" id="sau:SA1529"/>
<dbReference type="HOGENOM" id="CLU_070010_4_1_9"/>
<dbReference type="GO" id="GO:0016787">
    <property type="term" value="F:hydrolase activity"/>
    <property type="evidence" value="ECO:0007669"/>
    <property type="project" value="UniProtKB-UniRule"/>
</dbReference>
<dbReference type="CDD" id="cd06262">
    <property type="entry name" value="metallo-hydrolase-like_MBL-fold"/>
    <property type="match status" value="1"/>
</dbReference>
<dbReference type="Gene3D" id="3.60.15.10">
    <property type="entry name" value="Ribonuclease Z/Hydroxyacylglutathione hydrolase-like"/>
    <property type="match status" value="1"/>
</dbReference>
<dbReference type="HAMAP" id="MF_00457">
    <property type="entry name" value="UPF0173"/>
    <property type="match status" value="1"/>
</dbReference>
<dbReference type="InterPro" id="IPR001279">
    <property type="entry name" value="Metallo-B-lactamas"/>
</dbReference>
<dbReference type="InterPro" id="IPR036866">
    <property type="entry name" value="RibonucZ/Hydroxyglut_hydro"/>
</dbReference>
<dbReference type="InterPro" id="IPR022877">
    <property type="entry name" value="UPF0173"/>
</dbReference>
<dbReference type="InterPro" id="IPR050114">
    <property type="entry name" value="UPF0173_UPF0282_UlaG_hydrolase"/>
</dbReference>
<dbReference type="NCBIfam" id="NF001911">
    <property type="entry name" value="PRK00685.1"/>
    <property type="match status" value="1"/>
</dbReference>
<dbReference type="PANTHER" id="PTHR43546:SF3">
    <property type="entry name" value="UPF0173 METAL-DEPENDENT HYDROLASE MJ1163"/>
    <property type="match status" value="1"/>
</dbReference>
<dbReference type="PANTHER" id="PTHR43546">
    <property type="entry name" value="UPF0173 METAL-DEPENDENT HYDROLASE MJ1163-RELATED"/>
    <property type="match status" value="1"/>
</dbReference>
<dbReference type="Pfam" id="PF12706">
    <property type="entry name" value="Lactamase_B_2"/>
    <property type="match status" value="1"/>
</dbReference>
<dbReference type="SMART" id="SM00849">
    <property type="entry name" value="Lactamase_B"/>
    <property type="match status" value="1"/>
</dbReference>
<dbReference type="SUPFAM" id="SSF56281">
    <property type="entry name" value="Metallo-hydrolase/oxidoreductase"/>
    <property type="match status" value="1"/>
</dbReference>
<organism>
    <name type="scientific">Staphylococcus aureus (strain N315)</name>
    <dbReference type="NCBI Taxonomy" id="158879"/>
    <lineage>
        <taxon>Bacteria</taxon>
        <taxon>Bacillati</taxon>
        <taxon>Bacillota</taxon>
        <taxon>Bacilli</taxon>
        <taxon>Bacillales</taxon>
        <taxon>Staphylococcaceae</taxon>
        <taxon>Staphylococcus</taxon>
    </lineage>
</organism>